<keyword id="KW-0027">Amidation</keyword>
<keyword id="KW-0903">Direct protein sequencing</keyword>
<keyword id="KW-0527">Neuropeptide</keyword>
<dbReference type="GO" id="GO:0007218">
    <property type="term" value="P:neuropeptide signaling pathway"/>
    <property type="evidence" value="ECO:0007669"/>
    <property type="project" value="UniProtKB-KW"/>
</dbReference>
<sequence length="7" mass="705">AYNGPLA</sequence>
<name>MNP1_LEPDE</name>
<accession>P42984</accession>
<protein>
    <recommendedName>
        <fullName>Myotropic neuropeptide 1</fullName>
    </recommendedName>
    <alternativeName>
        <fullName>Led-MNP-I</fullName>
    </alternativeName>
</protein>
<comment type="function">
    <text>Myotropic peptide. Stimulates the contractions of the oviduct.</text>
</comment>
<evidence type="ECO:0000269" key="1">
    <source>
    </source>
</evidence>
<reference key="1">
    <citation type="journal article" date="1995" name="Peptides">
        <title>Identification, characterization, and immunological localization of a novel myotropic neuropeptide in the Colorado potato beetle, Leptinotarsa decemlineata.</title>
        <authorList>
            <person name="Spittaels K."/>
            <person name="Vankeerberghen A."/>
            <person name="Schoofs L."/>
            <person name="Torrekens S."/>
            <person name="Grauwels L."/>
            <person name="van Leuven F."/>
            <person name="de Loof A."/>
        </authorList>
    </citation>
    <scope>PROTEIN SEQUENCE</scope>
    <scope>AMIDATION AT ALA-7</scope>
    <scope>SYNTHESIS</scope>
    <source>
        <tissue>Head</tissue>
    </source>
</reference>
<feature type="peptide" id="PRO_0000044164" description="Myotropic neuropeptide 1">
    <location>
        <begin position="1"/>
        <end position="7"/>
    </location>
</feature>
<feature type="modified residue" description="Alanine amide" evidence="1">
    <location>
        <position position="7"/>
    </location>
</feature>
<organism>
    <name type="scientific">Leptinotarsa decemlineata</name>
    <name type="common">Colorado potato beetle</name>
    <name type="synonym">Doryphora decemlineata</name>
    <dbReference type="NCBI Taxonomy" id="7539"/>
    <lineage>
        <taxon>Eukaryota</taxon>
        <taxon>Metazoa</taxon>
        <taxon>Ecdysozoa</taxon>
        <taxon>Arthropoda</taxon>
        <taxon>Hexapoda</taxon>
        <taxon>Insecta</taxon>
        <taxon>Pterygota</taxon>
        <taxon>Neoptera</taxon>
        <taxon>Endopterygota</taxon>
        <taxon>Coleoptera</taxon>
        <taxon>Polyphaga</taxon>
        <taxon>Cucujiformia</taxon>
        <taxon>Chrysomeloidea</taxon>
        <taxon>Chrysomelidae</taxon>
        <taxon>Chrysomelinae</taxon>
        <taxon>Doryphorini</taxon>
        <taxon>Leptinotarsa</taxon>
    </lineage>
</organism>
<proteinExistence type="evidence at protein level"/>